<feature type="chain" id="PRO_0000116521" description="Uncharacterized serine-rich protein C18E5.07">
    <location>
        <begin position="1"/>
        <end position="615"/>
    </location>
</feature>
<feature type="region of interest" description="Disordered" evidence="1">
    <location>
        <begin position="1"/>
        <end position="61"/>
    </location>
</feature>
<feature type="region of interest" description="Disordered" evidence="1">
    <location>
        <begin position="97"/>
        <end position="149"/>
    </location>
</feature>
<feature type="region of interest" description="Disordered" evidence="1">
    <location>
        <begin position="181"/>
        <end position="217"/>
    </location>
</feature>
<feature type="region of interest" description="Disordered" evidence="1">
    <location>
        <begin position="266"/>
        <end position="481"/>
    </location>
</feature>
<feature type="region of interest" description="Disordered" evidence="1">
    <location>
        <begin position="493"/>
        <end position="565"/>
    </location>
</feature>
<feature type="region of interest" description="Disordered" evidence="1">
    <location>
        <begin position="586"/>
        <end position="615"/>
    </location>
</feature>
<feature type="compositionally biased region" description="Polar residues" evidence="1">
    <location>
        <begin position="1"/>
        <end position="11"/>
    </location>
</feature>
<feature type="compositionally biased region" description="Polar residues" evidence="1">
    <location>
        <begin position="41"/>
        <end position="55"/>
    </location>
</feature>
<feature type="compositionally biased region" description="Polar residues" evidence="1">
    <location>
        <begin position="128"/>
        <end position="140"/>
    </location>
</feature>
<feature type="compositionally biased region" description="Polar residues" evidence="1">
    <location>
        <begin position="272"/>
        <end position="283"/>
    </location>
</feature>
<feature type="compositionally biased region" description="Basic and acidic residues" evidence="1">
    <location>
        <begin position="312"/>
        <end position="323"/>
    </location>
</feature>
<feature type="compositionally biased region" description="Low complexity" evidence="1">
    <location>
        <begin position="356"/>
        <end position="376"/>
    </location>
</feature>
<feature type="compositionally biased region" description="Polar residues" evidence="1">
    <location>
        <begin position="505"/>
        <end position="522"/>
    </location>
</feature>
<feature type="compositionally biased region" description="Basic and acidic residues" evidence="1">
    <location>
        <begin position="586"/>
        <end position="599"/>
    </location>
</feature>
<feature type="compositionally biased region" description="Acidic residues" evidence="1">
    <location>
        <begin position="600"/>
        <end position="615"/>
    </location>
</feature>
<feature type="modified residue" description="Phosphoserine" evidence="2">
    <location>
        <position position="149"/>
    </location>
</feature>
<feature type="modified residue" description="Phosphoserine" evidence="2">
    <location>
        <position position="152"/>
    </location>
</feature>
<feature type="modified residue" description="Phosphoserine" evidence="2">
    <location>
        <position position="219"/>
    </location>
</feature>
<feature type="modified residue" description="Phosphoserine" evidence="2">
    <location>
        <position position="275"/>
    </location>
</feature>
<feature type="modified residue" description="Phosphothreonine" evidence="2">
    <location>
        <position position="276"/>
    </location>
</feature>
<feature type="modified residue" description="Phosphothreonine" evidence="2">
    <location>
        <position position="297"/>
    </location>
</feature>
<feature type="modified residue" description="Phosphothreonine" evidence="2">
    <location>
        <position position="514"/>
    </location>
</feature>
<feature type="modified residue" description="Phosphoserine" evidence="2">
    <location>
        <position position="516"/>
    </location>
</feature>
<feature type="sequence conflict" description="In Ref. 2; BAA13879." evidence="3" ref="2">
    <original>S</original>
    <variation>F</variation>
    <location>
        <position position="433"/>
    </location>
</feature>
<gene>
    <name type="ORF">SPBC18E5.07</name>
</gene>
<sequence>MSETSSNSPASGSKEAVPKSLAGSTSNIPNELFVGPDGRPLSQNAQGASKSSSKVVPQALVPEDDIRAVEGILNYGGSNDNRPVSHTHTFVELQKSHQNHLTENDRNFGTSRLDDVAPNADGVRRLRTSGSSTGLSNAPPSANVSKASSNLSLASLAKTQPERATPEVCVPLNPDTGSVPLIHPEQTDRGLPYAPDEKFHNSGSLKLPKGASLEDLSRSPSRAVLNEDGNVDECAPPEPWENEYNEVLDDVENAVVGTSPLEYTSKPLAANRQRSTADLTESDNICGLTAGKSDPVTDVDESQTIDEQSIPEAEKGFYTKDGEGTAGLPFDIVSNLDIPNENAHESSRSKKKHTGPSLSSASQPSAASSSSSSEPSNLDKINDVKKNIEVSANEPQPRPVKEDVPKSQVGGETDTTDVINNSTPKEETEESPSTELPETGKEQPPNKAEPAVPTEASSTKPSEAAEESTPRFSVRPNKFTGSRAGFVAALESRLQKGPLMRSFVPNKSKSPSGTKSPASGETSEAGVKETETTTSSESALPDARKSRARGPVRRPPTSVNTKPSFSVSGIDVFLNLPQSSVMKKKGVETRKEVEPKEEAVIPEEDVEVEVETEEQ</sequence>
<organism>
    <name type="scientific">Schizosaccharomyces pombe (strain 972 / ATCC 24843)</name>
    <name type="common">Fission yeast</name>
    <dbReference type="NCBI Taxonomy" id="284812"/>
    <lineage>
        <taxon>Eukaryota</taxon>
        <taxon>Fungi</taxon>
        <taxon>Dikarya</taxon>
        <taxon>Ascomycota</taxon>
        <taxon>Taphrinomycotina</taxon>
        <taxon>Schizosaccharomycetes</taxon>
        <taxon>Schizosaccharomycetales</taxon>
        <taxon>Schizosaccharomycetaceae</taxon>
        <taxon>Schizosaccharomyces</taxon>
    </lineage>
</organism>
<keyword id="KW-0597">Phosphoprotein</keyword>
<keyword id="KW-1185">Reference proteome</keyword>
<evidence type="ECO:0000256" key="1">
    <source>
        <dbReference type="SAM" id="MobiDB-lite"/>
    </source>
</evidence>
<evidence type="ECO:0000269" key="2">
    <source>
    </source>
</evidence>
<evidence type="ECO:0000305" key="3"/>
<reference key="1">
    <citation type="journal article" date="2002" name="Nature">
        <title>The genome sequence of Schizosaccharomyces pombe.</title>
        <authorList>
            <person name="Wood V."/>
            <person name="Gwilliam R."/>
            <person name="Rajandream M.A."/>
            <person name="Lyne M.H."/>
            <person name="Lyne R."/>
            <person name="Stewart A."/>
            <person name="Sgouros J.G."/>
            <person name="Peat N."/>
            <person name="Hayles J."/>
            <person name="Baker S.G."/>
            <person name="Basham D."/>
            <person name="Bowman S."/>
            <person name="Brooks K."/>
            <person name="Brown D."/>
            <person name="Brown S."/>
            <person name="Chillingworth T."/>
            <person name="Churcher C.M."/>
            <person name="Collins M."/>
            <person name="Connor R."/>
            <person name="Cronin A."/>
            <person name="Davis P."/>
            <person name="Feltwell T."/>
            <person name="Fraser A."/>
            <person name="Gentles S."/>
            <person name="Goble A."/>
            <person name="Hamlin N."/>
            <person name="Harris D.E."/>
            <person name="Hidalgo J."/>
            <person name="Hodgson G."/>
            <person name="Holroyd S."/>
            <person name="Hornsby T."/>
            <person name="Howarth S."/>
            <person name="Huckle E.J."/>
            <person name="Hunt S."/>
            <person name="Jagels K."/>
            <person name="James K.D."/>
            <person name="Jones L."/>
            <person name="Jones M."/>
            <person name="Leather S."/>
            <person name="McDonald S."/>
            <person name="McLean J."/>
            <person name="Mooney P."/>
            <person name="Moule S."/>
            <person name="Mungall K.L."/>
            <person name="Murphy L.D."/>
            <person name="Niblett D."/>
            <person name="Odell C."/>
            <person name="Oliver K."/>
            <person name="O'Neil S."/>
            <person name="Pearson D."/>
            <person name="Quail M.A."/>
            <person name="Rabbinowitsch E."/>
            <person name="Rutherford K.M."/>
            <person name="Rutter S."/>
            <person name="Saunders D."/>
            <person name="Seeger K."/>
            <person name="Sharp S."/>
            <person name="Skelton J."/>
            <person name="Simmonds M.N."/>
            <person name="Squares R."/>
            <person name="Squares S."/>
            <person name="Stevens K."/>
            <person name="Taylor K."/>
            <person name="Taylor R.G."/>
            <person name="Tivey A."/>
            <person name="Walsh S.V."/>
            <person name="Warren T."/>
            <person name="Whitehead S."/>
            <person name="Woodward J.R."/>
            <person name="Volckaert G."/>
            <person name="Aert R."/>
            <person name="Robben J."/>
            <person name="Grymonprez B."/>
            <person name="Weltjens I."/>
            <person name="Vanstreels E."/>
            <person name="Rieger M."/>
            <person name="Schaefer M."/>
            <person name="Mueller-Auer S."/>
            <person name="Gabel C."/>
            <person name="Fuchs M."/>
            <person name="Duesterhoeft A."/>
            <person name="Fritzc C."/>
            <person name="Holzer E."/>
            <person name="Moestl D."/>
            <person name="Hilbert H."/>
            <person name="Borzym K."/>
            <person name="Langer I."/>
            <person name="Beck A."/>
            <person name="Lehrach H."/>
            <person name="Reinhardt R."/>
            <person name="Pohl T.M."/>
            <person name="Eger P."/>
            <person name="Zimmermann W."/>
            <person name="Wedler H."/>
            <person name="Wambutt R."/>
            <person name="Purnelle B."/>
            <person name="Goffeau A."/>
            <person name="Cadieu E."/>
            <person name="Dreano S."/>
            <person name="Gloux S."/>
            <person name="Lelaure V."/>
            <person name="Mottier S."/>
            <person name="Galibert F."/>
            <person name="Aves S.J."/>
            <person name="Xiang Z."/>
            <person name="Hunt C."/>
            <person name="Moore K."/>
            <person name="Hurst S.M."/>
            <person name="Lucas M."/>
            <person name="Rochet M."/>
            <person name="Gaillardin C."/>
            <person name="Tallada V.A."/>
            <person name="Garzon A."/>
            <person name="Thode G."/>
            <person name="Daga R.R."/>
            <person name="Cruzado L."/>
            <person name="Jimenez J."/>
            <person name="Sanchez M."/>
            <person name="del Rey F."/>
            <person name="Benito J."/>
            <person name="Dominguez A."/>
            <person name="Revuelta J.L."/>
            <person name="Moreno S."/>
            <person name="Armstrong J."/>
            <person name="Forsburg S.L."/>
            <person name="Cerutti L."/>
            <person name="Lowe T."/>
            <person name="McCombie W.R."/>
            <person name="Paulsen I."/>
            <person name="Potashkin J."/>
            <person name="Shpakovski G.V."/>
            <person name="Ussery D."/>
            <person name="Barrell B.G."/>
            <person name="Nurse P."/>
        </authorList>
    </citation>
    <scope>NUCLEOTIDE SEQUENCE [LARGE SCALE GENOMIC DNA]</scope>
    <source>
        <strain>972 / ATCC 24843</strain>
    </source>
</reference>
<reference key="2">
    <citation type="journal article" date="1997" name="DNA Res.">
        <title>Identification of open reading frames in Schizosaccharomyces pombe cDNAs.</title>
        <authorList>
            <person name="Yoshioka S."/>
            <person name="Kato K."/>
            <person name="Nakai K."/>
            <person name="Okayama H."/>
            <person name="Nojima H."/>
        </authorList>
    </citation>
    <scope>NUCLEOTIDE SEQUENCE [LARGE SCALE MRNA] OF 304-573</scope>
    <source>
        <strain>PR745</strain>
    </source>
</reference>
<reference key="3">
    <citation type="journal article" date="2008" name="J. Proteome Res.">
        <title>Phosphoproteome analysis of fission yeast.</title>
        <authorList>
            <person name="Wilson-Grady J.T."/>
            <person name="Villen J."/>
            <person name="Gygi S.P."/>
        </authorList>
    </citation>
    <scope>PHOSPHORYLATION [LARGE SCALE ANALYSIS] AT SER-149; SER-152; SER-219; SER-275; THR-276; THR-297; THR-514 AND SER-516</scope>
    <scope>IDENTIFICATION BY MASS SPECTROMETRY</scope>
</reference>
<protein>
    <recommendedName>
        <fullName>Uncharacterized serine-rich protein C18E5.07</fullName>
    </recommendedName>
</protein>
<accession>O94497</accession>
<accession>P78868</accession>
<dbReference type="EMBL" id="CU329671">
    <property type="protein sequence ID" value="CAA22667.1"/>
    <property type="molecule type" value="Genomic_DNA"/>
</dbReference>
<dbReference type="EMBL" id="D89218">
    <property type="protein sequence ID" value="BAA13879.1"/>
    <property type="status" value="ALT_FRAME"/>
    <property type="molecule type" value="mRNA"/>
</dbReference>
<dbReference type="PIR" id="T39758">
    <property type="entry name" value="T39758"/>
</dbReference>
<dbReference type="PIR" id="T43039">
    <property type="entry name" value="T43039"/>
</dbReference>
<dbReference type="BioGRID" id="277093">
    <property type="interactions" value="2"/>
</dbReference>
<dbReference type="iPTMnet" id="O94497"/>
<dbReference type="PaxDb" id="4896-SPBC18E5.07.1"/>
<dbReference type="EnsemblFungi" id="SPBC18E5.07.1">
    <property type="protein sequence ID" value="SPBC18E5.07.1:pep"/>
    <property type="gene ID" value="SPBC18E5.07"/>
</dbReference>
<dbReference type="KEGG" id="spo:2540566"/>
<dbReference type="PomBase" id="SPBC18E5.07"/>
<dbReference type="VEuPathDB" id="FungiDB:SPBC18E5.07"/>
<dbReference type="HOGENOM" id="CLU_471050_0_0_1"/>
<dbReference type="InParanoid" id="O94497"/>
<dbReference type="OMA" id="WENEYNE"/>
<dbReference type="PRO" id="PR:O94497"/>
<dbReference type="Proteomes" id="UP000002485">
    <property type="component" value="Chromosome II"/>
</dbReference>
<dbReference type="GO" id="GO:0005829">
    <property type="term" value="C:cytosol"/>
    <property type="evidence" value="ECO:0007005"/>
    <property type="project" value="PomBase"/>
</dbReference>
<dbReference type="GO" id="GO:0007015">
    <property type="term" value="P:actin filament organization"/>
    <property type="evidence" value="ECO:0000266"/>
    <property type="project" value="PomBase"/>
</dbReference>
<dbReference type="InterPro" id="IPR021582">
    <property type="entry name" value="Aim21"/>
</dbReference>
<dbReference type="Pfam" id="PF11489">
    <property type="entry name" value="Aim21"/>
    <property type="match status" value="1"/>
</dbReference>
<name>YBS7_SCHPO</name>
<comment type="sequence caution" evidence="3">
    <conflict type="frameshift">
        <sequence resource="EMBL-CDS" id="BAA13879"/>
    </conflict>
</comment>
<proteinExistence type="evidence at protein level"/>